<dbReference type="EMBL" id="AJ002513">
    <property type="protein sequence ID" value="CAA05504.1"/>
    <property type="status" value="ALT_INIT"/>
    <property type="molecule type" value="Genomic_DNA"/>
</dbReference>
<dbReference type="EMBL" id="CU329670">
    <property type="protein sequence ID" value="CAK9837928.1"/>
    <property type="molecule type" value="Genomic_DNA"/>
</dbReference>
<dbReference type="PIR" id="T38870">
    <property type="entry name" value="T38870"/>
</dbReference>
<dbReference type="RefSeq" id="NP_593693.1">
    <property type="nucleotide sequence ID" value="NM_001019125.2"/>
</dbReference>
<dbReference type="SMR" id="Q10241"/>
<dbReference type="BioGRID" id="280010">
    <property type="interactions" value="8"/>
</dbReference>
<dbReference type="FunCoup" id="Q10241">
    <property type="interactions" value="22"/>
</dbReference>
<dbReference type="STRING" id="284812.Q10241"/>
<dbReference type="PaxDb" id="4896-SPAC4G9.11c.1"/>
<dbReference type="EnsemblFungi" id="SPAC4G9.11c.1">
    <property type="protein sequence ID" value="SPAC4G9.11c.1:pep"/>
    <property type="gene ID" value="SPAC4G9.11c"/>
</dbReference>
<dbReference type="GeneID" id="2543595"/>
<dbReference type="KEGG" id="spo:2543595"/>
<dbReference type="PomBase" id="SPAC4G9.11c">
    <property type="gene designation" value="cmb1"/>
</dbReference>
<dbReference type="VEuPathDB" id="FungiDB:SPAC4G9.11c"/>
<dbReference type="eggNOG" id="KOG0381">
    <property type="taxonomic scope" value="Eukaryota"/>
</dbReference>
<dbReference type="HOGENOM" id="CLU_1262183_0_0_1"/>
<dbReference type="InParanoid" id="Q10241"/>
<dbReference type="OMA" id="AIRIRQF"/>
<dbReference type="PhylomeDB" id="Q10241"/>
<dbReference type="Reactome" id="R-SPO-140342">
    <property type="pathway name" value="Apoptosis induced DNA fragmentation"/>
</dbReference>
<dbReference type="Reactome" id="R-SPO-163282">
    <property type="pathway name" value="Mitochondrial transcription initiation"/>
</dbReference>
<dbReference type="Reactome" id="R-SPO-5620971">
    <property type="pathway name" value="Pyroptosis"/>
</dbReference>
<dbReference type="Reactome" id="R-SPO-5686938">
    <property type="pathway name" value="Regulation of TLR by endogenous ligand"/>
</dbReference>
<dbReference type="Reactome" id="R-SPO-6798695">
    <property type="pathway name" value="Neutrophil degranulation"/>
</dbReference>
<dbReference type="Reactome" id="R-SPO-9837999">
    <property type="pathway name" value="Mitochondrial protein degradation"/>
</dbReference>
<dbReference type="PRO" id="PR:Q10241"/>
<dbReference type="Proteomes" id="UP000002485">
    <property type="component" value="Chromosome I"/>
</dbReference>
<dbReference type="GO" id="GO:0042645">
    <property type="term" value="C:mitochondrial nucleoid"/>
    <property type="evidence" value="ECO:0000266"/>
    <property type="project" value="PomBase"/>
</dbReference>
<dbReference type="GO" id="GO:0005739">
    <property type="term" value="C:mitochondrion"/>
    <property type="evidence" value="ECO:0007005"/>
    <property type="project" value="PomBase"/>
</dbReference>
<dbReference type="GO" id="GO:0005634">
    <property type="term" value="C:nucleus"/>
    <property type="evidence" value="ECO:0007669"/>
    <property type="project" value="UniProtKB-UniRule"/>
</dbReference>
<dbReference type="GO" id="GO:0003677">
    <property type="term" value="F:DNA binding"/>
    <property type="evidence" value="ECO:0007669"/>
    <property type="project" value="UniProtKB-UniRule"/>
</dbReference>
<dbReference type="GO" id="GO:0030983">
    <property type="term" value="F:mismatched DNA binding"/>
    <property type="evidence" value="ECO:0000314"/>
    <property type="project" value="PomBase"/>
</dbReference>
<dbReference type="GO" id="GO:0001018">
    <property type="term" value="F:mitochondrial promoter sequence-specific DNA binding"/>
    <property type="evidence" value="ECO:0000266"/>
    <property type="project" value="PomBase"/>
</dbReference>
<dbReference type="GO" id="GO:0034246">
    <property type="term" value="F:mitochondrial transcription factor activity"/>
    <property type="evidence" value="ECO:0000266"/>
    <property type="project" value="PomBase"/>
</dbReference>
<dbReference type="GO" id="GO:0032141">
    <property type="term" value="F:single cytosine insertion binding"/>
    <property type="evidence" value="ECO:0000314"/>
    <property type="project" value="PomBase"/>
</dbReference>
<dbReference type="GO" id="GO:0035487">
    <property type="term" value="F:thymine/thymine mispair binding"/>
    <property type="evidence" value="ECO:0000314"/>
    <property type="project" value="PomBase"/>
</dbReference>
<dbReference type="GO" id="GO:0090139">
    <property type="term" value="P:mitochondrial chromosome packaging"/>
    <property type="evidence" value="ECO:0000266"/>
    <property type="project" value="PomBase"/>
</dbReference>
<dbReference type="GO" id="GO:0006391">
    <property type="term" value="P:transcription initiation at mitochondrial promoter"/>
    <property type="evidence" value="ECO:0000266"/>
    <property type="project" value="PomBase"/>
</dbReference>
<dbReference type="Gene3D" id="1.10.30.10">
    <property type="entry name" value="High mobility group box domain"/>
    <property type="match status" value="1"/>
</dbReference>
<dbReference type="InterPro" id="IPR009071">
    <property type="entry name" value="HMG_box_dom"/>
</dbReference>
<dbReference type="InterPro" id="IPR036910">
    <property type="entry name" value="HMG_box_dom_sf"/>
</dbReference>
<dbReference type="InterPro" id="IPR050342">
    <property type="entry name" value="HMGB"/>
</dbReference>
<dbReference type="PANTHER" id="PTHR48112">
    <property type="entry name" value="HIGH MOBILITY GROUP PROTEIN DSP1"/>
    <property type="match status" value="1"/>
</dbReference>
<dbReference type="PANTHER" id="PTHR48112:SF22">
    <property type="entry name" value="MITOCHONDRIAL TRANSCRIPTION FACTOR A, ISOFORM B"/>
    <property type="match status" value="1"/>
</dbReference>
<dbReference type="Pfam" id="PF09011">
    <property type="entry name" value="HMG_box_2"/>
    <property type="match status" value="1"/>
</dbReference>
<dbReference type="SMART" id="SM00398">
    <property type="entry name" value="HMG"/>
    <property type="match status" value="1"/>
</dbReference>
<dbReference type="SUPFAM" id="SSF47095">
    <property type="entry name" value="HMG-box"/>
    <property type="match status" value="1"/>
</dbReference>
<dbReference type="PROSITE" id="PS50118">
    <property type="entry name" value="HMG_BOX_2"/>
    <property type="match status" value="1"/>
</dbReference>
<name>CMB1_SCHPO</name>
<organism>
    <name type="scientific">Schizosaccharomyces pombe (strain 972 / ATCC 24843)</name>
    <name type="common">Fission yeast</name>
    <dbReference type="NCBI Taxonomy" id="284812"/>
    <lineage>
        <taxon>Eukaryota</taxon>
        <taxon>Fungi</taxon>
        <taxon>Dikarya</taxon>
        <taxon>Ascomycota</taxon>
        <taxon>Taphrinomycotina</taxon>
        <taxon>Schizosaccharomycetes</taxon>
        <taxon>Schizosaccharomycetales</taxon>
        <taxon>Schizosaccharomycetaceae</taxon>
        <taxon>Schizosaccharomyces</taxon>
    </lineage>
</organism>
<protein>
    <recommendedName>
        <fullName evidence="5">Cytosine-containing mismatch-binding protein 1</fullName>
    </recommendedName>
</protein>
<sequence length="199" mass="23456">MVFAIRIRQFHTTLVSAEKNGLQKLIPPRLKTIWNQMLVETKGAGNGPERFEMIRQKYKALTADEIQKYKNKLQEQFDAEKKRFMETLRSFTPTEIDSENRRRSKEAHSTGSRYYRLRHPDVPKKPSSAFILFYKELRNNPKLRQELGIPEAISTLVEETQNASKAWKELAEDKKKPFIDKSKALKEQYDKFMKEAGFR</sequence>
<proteinExistence type="evidence at protein level"/>
<reference key="1">
    <citation type="journal article" date="1998" name="J. Biol. Chem.">
        <title>The high mobility group domain protein cmb1 of Schizosaccharomyces pombe binds to cytosines in base mismatches and opposite chemically altered guanines.</title>
        <authorList>
            <person name="Fleck O."/>
            <person name="Kunz C."/>
            <person name="Rudolph C."/>
            <person name="Kohli J."/>
        </authorList>
    </citation>
    <scope>NUCLEOTIDE SEQUENCE [GENOMIC DNA]</scope>
    <scope>PROTEIN SEQUENCE OF 18-46</scope>
    <scope>FUNCTION</scope>
    <source>
        <strain>972 / ATCC 24843</strain>
    </source>
</reference>
<reference key="2">
    <citation type="journal article" date="2002" name="Nature">
        <title>The genome sequence of Schizosaccharomyces pombe.</title>
        <authorList>
            <person name="Wood V."/>
            <person name="Gwilliam R."/>
            <person name="Rajandream M.A."/>
            <person name="Lyne M.H."/>
            <person name="Lyne R."/>
            <person name="Stewart A."/>
            <person name="Sgouros J.G."/>
            <person name="Peat N."/>
            <person name="Hayles J."/>
            <person name="Baker S.G."/>
            <person name="Basham D."/>
            <person name="Bowman S."/>
            <person name="Brooks K."/>
            <person name="Brown D."/>
            <person name="Brown S."/>
            <person name="Chillingworth T."/>
            <person name="Churcher C.M."/>
            <person name="Collins M."/>
            <person name="Connor R."/>
            <person name="Cronin A."/>
            <person name="Davis P."/>
            <person name="Feltwell T."/>
            <person name="Fraser A."/>
            <person name="Gentles S."/>
            <person name="Goble A."/>
            <person name="Hamlin N."/>
            <person name="Harris D.E."/>
            <person name="Hidalgo J."/>
            <person name="Hodgson G."/>
            <person name="Holroyd S."/>
            <person name="Hornsby T."/>
            <person name="Howarth S."/>
            <person name="Huckle E.J."/>
            <person name="Hunt S."/>
            <person name="Jagels K."/>
            <person name="James K.D."/>
            <person name="Jones L."/>
            <person name="Jones M."/>
            <person name="Leather S."/>
            <person name="McDonald S."/>
            <person name="McLean J."/>
            <person name="Mooney P."/>
            <person name="Moule S."/>
            <person name="Mungall K.L."/>
            <person name="Murphy L.D."/>
            <person name="Niblett D."/>
            <person name="Odell C."/>
            <person name="Oliver K."/>
            <person name="O'Neil S."/>
            <person name="Pearson D."/>
            <person name="Quail M.A."/>
            <person name="Rabbinowitsch E."/>
            <person name="Rutherford K.M."/>
            <person name="Rutter S."/>
            <person name="Saunders D."/>
            <person name="Seeger K."/>
            <person name="Sharp S."/>
            <person name="Skelton J."/>
            <person name="Simmonds M.N."/>
            <person name="Squares R."/>
            <person name="Squares S."/>
            <person name="Stevens K."/>
            <person name="Taylor K."/>
            <person name="Taylor R.G."/>
            <person name="Tivey A."/>
            <person name="Walsh S.V."/>
            <person name="Warren T."/>
            <person name="Whitehead S."/>
            <person name="Woodward J.R."/>
            <person name="Volckaert G."/>
            <person name="Aert R."/>
            <person name="Robben J."/>
            <person name="Grymonprez B."/>
            <person name="Weltjens I."/>
            <person name="Vanstreels E."/>
            <person name="Rieger M."/>
            <person name="Schaefer M."/>
            <person name="Mueller-Auer S."/>
            <person name="Gabel C."/>
            <person name="Fuchs M."/>
            <person name="Duesterhoeft A."/>
            <person name="Fritzc C."/>
            <person name="Holzer E."/>
            <person name="Moestl D."/>
            <person name="Hilbert H."/>
            <person name="Borzym K."/>
            <person name="Langer I."/>
            <person name="Beck A."/>
            <person name="Lehrach H."/>
            <person name="Reinhardt R."/>
            <person name="Pohl T.M."/>
            <person name="Eger P."/>
            <person name="Zimmermann W."/>
            <person name="Wedler H."/>
            <person name="Wambutt R."/>
            <person name="Purnelle B."/>
            <person name="Goffeau A."/>
            <person name="Cadieu E."/>
            <person name="Dreano S."/>
            <person name="Gloux S."/>
            <person name="Lelaure V."/>
            <person name="Mottier S."/>
            <person name="Galibert F."/>
            <person name="Aves S.J."/>
            <person name="Xiang Z."/>
            <person name="Hunt C."/>
            <person name="Moore K."/>
            <person name="Hurst S.M."/>
            <person name="Lucas M."/>
            <person name="Rochet M."/>
            <person name="Gaillardin C."/>
            <person name="Tallada V.A."/>
            <person name="Garzon A."/>
            <person name="Thode G."/>
            <person name="Daga R.R."/>
            <person name="Cruzado L."/>
            <person name="Jimenez J."/>
            <person name="Sanchez M."/>
            <person name="del Rey F."/>
            <person name="Benito J."/>
            <person name="Dominguez A."/>
            <person name="Revuelta J.L."/>
            <person name="Moreno S."/>
            <person name="Armstrong J."/>
            <person name="Forsburg S.L."/>
            <person name="Cerutti L."/>
            <person name="Lowe T."/>
            <person name="McCombie W.R."/>
            <person name="Paulsen I."/>
            <person name="Potashkin J."/>
            <person name="Shpakovski G.V."/>
            <person name="Ussery D."/>
            <person name="Barrell B.G."/>
            <person name="Nurse P."/>
        </authorList>
    </citation>
    <scope>NUCLEOTIDE SEQUENCE [LARGE SCALE GENOMIC DNA]</scope>
    <source>
        <strain>972 / ATCC 24843</strain>
    </source>
</reference>
<reference key="3">
    <citation type="journal article" date="2001" name="J. Mol. Biol.">
        <title>Biochemical characterization of the structure-specific DNA-binding protein Cmb1 from Schizosaccharomyces pombe.</title>
        <authorList>
            <person name="Sassoon J."/>
            <person name="Lilie H."/>
            <person name="Baumann U."/>
            <person name="Kohli J."/>
        </authorList>
    </citation>
    <scope>FUNCTION</scope>
    <scope>IDENTIFICATION OF PROBABLE INITIATION SITE</scope>
    <scope>SUBUNIT</scope>
</reference>
<feature type="chain" id="PRO_0000048805" description="Cytosine-containing mismatch-binding protein 1">
    <location>
        <begin position="1"/>
        <end position="199"/>
    </location>
</feature>
<feature type="DNA-binding region" description="HMG box" evidence="1">
    <location>
        <begin position="123"/>
        <end position="197"/>
    </location>
</feature>
<comment type="function">
    <text evidence="2 3">Binds to cytosines in base mismatches and opposite chemically altered guanines. May be involved in repair of DNA damage.</text>
</comment>
<comment type="subunit">
    <text evidence="2">Monomer.</text>
</comment>
<comment type="subcellular location">
    <subcellularLocation>
        <location evidence="1">Nucleus</location>
    </subcellularLocation>
</comment>
<comment type="sequence caution" evidence="5">
    <conflict type="erroneous initiation">
        <sequence resource="EMBL-CDS" id="CAA05504"/>
    </conflict>
    <text>Extended N-terminus.</text>
</comment>
<accession>Q10241</accession>
<accession>A0AAN2H832</accession>
<keyword id="KW-0903">Direct protein sequencing</keyword>
<keyword id="KW-0238">DNA-binding</keyword>
<keyword id="KW-0539">Nucleus</keyword>
<keyword id="KW-1185">Reference proteome</keyword>
<gene>
    <name evidence="4" type="primary">cmb1</name>
    <name evidence="6" type="ORF">SPAC4G9.11c</name>
</gene>
<evidence type="ECO:0000255" key="1">
    <source>
        <dbReference type="PROSITE-ProRule" id="PRU00267"/>
    </source>
</evidence>
<evidence type="ECO:0000269" key="2">
    <source>
    </source>
</evidence>
<evidence type="ECO:0000269" key="3">
    <source>
    </source>
</evidence>
<evidence type="ECO:0000303" key="4">
    <source>
    </source>
</evidence>
<evidence type="ECO:0000305" key="5"/>
<evidence type="ECO:0000312" key="6">
    <source>
        <dbReference type="PomBase" id="SPAC4G9.11c"/>
    </source>
</evidence>